<organism>
    <name type="scientific">Bacillus velezensis (strain DSM 23117 / BGSC 10A6 / LMG 26770 / FZB42)</name>
    <name type="common">Bacillus amyloliquefaciens subsp. plantarum</name>
    <dbReference type="NCBI Taxonomy" id="326423"/>
    <lineage>
        <taxon>Bacteria</taxon>
        <taxon>Bacillati</taxon>
        <taxon>Bacillota</taxon>
        <taxon>Bacilli</taxon>
        <taxon>Bacillales</taxon>
        <taxon>Bacillaceae</taxon>
        <taxon>Bacillus</taxon>
        <taxon>Bacillus amyloliquefaciens group</taxon>
    </lineage>
</organism>
<gene>
    <name type="ordered locus">RBAM_025090</name>
</gene>
<sequence length="231" mass="26080">MIIRDLPLKLRDFPEKEKPRERLLHFGAEHLSNNELLAILLRTGTKHESVMNLAHRLLRTFDGLRLLKGASAQELSSIPGIGTVKAVQILAAIELGSRIHKTSAGEHCVIRSPEDGAKYVMEDMRFLSQEHFVCLYLNTKNQVIHKRTVFIGSLNSSIVHPREVFKEAFKRSAASFICVHNHPSGDPTPSREDIEVTRRLFECGNLIGIELLDHLVIGDKKFVSLKEKGYL</sequence>
<dbReference type="EMBL" id="CP000560">
    <property type="protein sequence ID" value="ABS74869.1"/>
    <property type="molecule type" value="Genomic_DNA"/>
</dbReference>
<dbReference type="SMR" id="A7Z793"/>
<dbReference type="GeneID" id="93081651"/>
<dbReference type="KEGG" id="bay:RBAM_025090"/>
<dbReference type="HOGENOM" id="CLU_073529_0_2_9"/>
<dbReference type="Proteomes" id="UP000001120">
    <property type="component" value="Chromosome"/>
</dbReference>
<dbReference type="GO" id="GO:0046872">
    <property type="term" value="F:metal ion binding"/>
    <property type="evidence" value="ECO:0007669"/>
    <property type="project" value="UniProtKB-KW"/>
</dbReference>
<dbReference type="GO" id="GO:0008237">
    <property type="term" value="F:metallopeptidase activity"/>
    <property type="evidence" value="ECO:0007669"/>
    <property type="project" value="UniProtKB-KW"/>
</dbReference>
<dbReference type="GO" id="GO:0006508">
    <property type="term" value="P:proteolysis"/>
    <property type="evidence" value="ECO:0007669"/>
    <property type="project" value="UniProtKB-KW"/>
</dbReference>
<dbReference type="CDD" id="cd08071">
    <property type="entry name" value="MPN_DUF2466"/>
    <property type="match status" value="1"/>
</dbReference>
<dbReference type="Gene3D" id="1.10.150.20">
    <property type="entry name" value="5' to 3' exonuclease, C-terminal subdomain"/>
    <property type="match status" value="1"/>
</dbReference>
<dbReference type="Gene3D" id="3.40.140.10">
    <property type="entry name" value="Cytidine Deaminase, domain 2"/>
    <property type="match status" value="1"/>
</dbReference>
<dbReference type="InterPro" id="IPR037518">
    <property type="entry name" value="MPN"/>
</dbReference>
<dbReference type="InterPro" id="IPR025657">
    <property type="entry name" value="RadC_JAB"/>
</dbReference>
<dbReference type="InterPro" id="IPR010994">
    <property type="entry name" value="RuvA_2-like"/>
</dbReference>
<dbReference type="InterPro" id="IPR001405">
    <property type="entry name" value="UPF0758"/>
</dbReference>
<dbReference type="InterPro" id="IPR020891">
    <property type="entry name" value="UPF0758_CS"/>
</dbReference>
<dbReference type="InterPro" id="IPR046778">
    <property type="entry name" value="UPF0758_N"/>
</dbReference>
<dbReference type="NCBIfam" id="NF000642">
    <property type="entry name" value="PRK00024.1"/>
    <property type="match status" value="1"/>
</dbReference>
<dbReference type="NCBIfam" id="TIGR00608">
    <property type="entry name" value="radc"/>
    <property type="match status" value="1"/>
</dbReference>
<dbReference type="PANTHER" id="PTHR30471">
    <property type="entry name" value="DNA REPAIR PROTEIN RADC"/>
    <property type="match status" value="1"/>
</dbReference>
<dbReference type="PANTHER" id="PTHR30471:SF3">
    <property type="entry name" value="UPF0758 PROTEIN YEES-RELATED"/>
    <property type="match status" value="1"/>
</dbReference>
<dbReference type="Pfam" id="PF04002">
    <property type="entry name" value="RadC"/>
    <property type="match status" value="1"/>
</dbReference>
<dbReference type="Pfam" id="PF20582">
    <property type="entry name" value="UPF0758_N"/>
    <property type="match status" value="1"/>
</dbReference>
<dbReference type="SUPFAM" id="SSF102712">
    <property type="entry name" value="JAB1/MPN domain"/>
    <property type="match status" value="1"/>
</dbReference>
<dbReference type="SUPFAM" id="SSF47781">
    <property type="entry name" value="RuvA domain 2-like"/>
    <property type="match status" value="1"/>
</dbReference>
<dbReference type="PROSITE" id="PS50249">
    <property type="entry name" value="MPN"/>
    <property type="match status" value="1"/>
</dbReference>
<dbReference type="PROSITE" id="PS01302">
    <property type="entry name" value="UPF0758"/>
    <property type="match status" value="1"/>
</dbReference>
<feature type="chain" id="PRO_1000001645" description="UPF0758 protein RBAM_025090">
    <location>
        <begin position="1"/>
        <end position="231"/>
    </location>
</feature>
<feature type="domain" description="MPN" evidence="1">
    <location>
        <begin position="109"/>
        <end position="231"/>
    </location>
</feature>
<feature type="short sequence motif" description="JAMM motif" evidence="1">
    <location>
        <begin position="180"/>
        <end position="193"/>
    </location>
</feature>
<feature type="binding site" evidence="1">
    <location>
        <position position="180"/>
    </location>
    <ligand>
        <name>Zn(2+)</name>
        <dbReference type="ChEBI" id="CHEBI:29105"/>
        <note>catalytic</note>
    </ligand>
</feature>
<feature type="binding site" evidence="1">
    <location>
        <position position="182"/>
    </location>
    <ligand>
        <name>Zn(2+)</name>
        <dbReference type="ChEBI" id="CHEBI:29105"/>
        <note>catalytic</note>
    </ligand>
</feature>
<feature type="binding site" evidence="1">
    <location>
        <position position="193"/>
    </location>
    <ligand>
        <name>Zn(2+)</name>
        <dbReference type="ChEBI" id="CHEBI:29105"/>
        <note>catalytic</note>
    </ligand>
</feature>
<reference key="1">
    <citation type="journal article" date="2007" name="Nat. Biotechnol.">
        <title>Comparative analysis of the complete genome sequence of the plant growth-promoting bacterium Bacillus amyloliquefaciens FZB42.</title>
        <authorList>
            <person name="Chen X.H."/>
            <person name="Koumoutsi A."/>
            <person name="Scholz R."/>
            <person name="Eisenreich A."/>
            <person name="Schneider K."/>
            <person name="Heinemeyer I."/>
            <person name="Morgenstern B."/>
            <person name="Voss B."/>
            <person name="Hess W.R."/>
            <person name="Reva O."/>
            <person name="Junge H."/>
            <person name="Voigt B."/>
            <person name="Jungblut P.R."/>
            <person name="Vater J."/>
            <person name="Suessmuth R."/>
            <person name="Liesegang H."/>
            <person name="Strittmatter A."/>
            <person name="Gottschalk G."/>
            <person name="Borriss R."/>
        </authorList>
    </citation>
    <scope>NUCLEOTIDE SEQUENCE [LARGE SCALE GENOMIC DNA]</scope>
    <source>
        <strain>DSM 23117 / BGSC 10A6 / LMG 26770 / FZB42</strain>
    </source>
</reference>
<accession>A7Z793</accession>
<evidence type="ECO:0000255" key="1">
    <source>
        <dbReference type="PROSITE-ProRule" id="PRU01182"/>
    </source>
</evidence>
<evidence type="ECO:0000305" key="2"/>
<comment type="similarity">
    <text evidence="2">Belongs to the UPF0758 family.</text>
</comment>
<protein>
    <recommendedName>
        <fullName>UPF0758 protein RBAM_025090</fullName>
    </recommendedName>
</protein>
<name>Y2509_BACVZ</name>
<keyword id="KW-0378">Hydrolase</keyword>
<keyword id="KW-0479">Metal-binding</keyword>
<keyword id="KW-0482">Metalloprotease</keyword>
<keyword id="KW-0645">Protease</keyword>
<keyword id="KW-0862">Zinc</keyword>
<proteinExistence type="inferred from homology"/>